<evidence type="ECO:0000255" key="1">
    <source>
        <dbReference type="HAMAP-Rule" id="MF_00534"/>
    </source>
</evidence>
<sequence>MEISIKNIFEKADFYLGKKIIVNGWIRNCRFQKKLIFIELNDGTFLENFQIVYKNVDLEKIKDILQIGTSLKVEGFLKKNEKQEKNLEILAQNITLLGSSDFSYPIQPKKHSKSFLRTIPHLRTRTKLFGAVFRIRSTAFFALHHFFHKKGFFHINTPIITPNDGEGAGELFQLTSLNLERLSQEKPSTINYQKDFFGKKVFLTVTGQLEAEAMALALNKVYTFGPTFRAEKSNTPRHAAEFWMLEPEMAFCDLKQNLKVAQEMLQEVVVQCLQENQKDIEFLDQTVRNGLLQELKNVVQEKEFLVITYQKAIEILASSGVAFENKVFYGSDLATEHEKFLTEKHFQKPVFIIDWPKEIKAFYMKNNPDQKTVAAMDLLIPRVGELIGGSQREENLAVLIEKMQQMKIPQKEFEWYLDLRRFGSCIHSGFGLGFERLLLFLTGLDNIRDVIAFPRTY</sequence>
<accession>B1V8X4</accession>
<proteinExistence type="inferred from homology"/>
<name>SYN_PHYAS</name>
<dbReference type="EC" id="6.1.1.22" evidence="1"/>
<dbReference type="EMBL" id="AM422018">
    <property type="protein sequence ID" value="CAM11361.1"/>
    <property type="molecule type" value="Genomic_DNA"/>
</dbReference>
<dbReference type="SMR" id="B1V8X4"/>
<dbReference type="STRING" id="59748.PA0026"/>
<dbReference type="KEGG" id="pal:PA0026"/>
<dbReference type="eggNOG" id="COG0017">
    <property type="taxonomic scope" value="Bacteria"/>
</dbReference>
<dbReference type="Proteomes" id="UP000008323">
    <property type="component" value="Chromosome"/>
</dbReference>
<dbReference type="GO" id="GO:0005737">
    <property type="term" value="C:cytoplasm"/>
    <property type="evidence" value="ECO:0007669"/>
    <property type="project" value="UniProtKB-SubCell"/>
</dbReference>
<dbReference type="GO" id="GO:0004816">
    <property type="term" value="F:asparagine-tRNA ligase activity"/>
    <property type="evidence" value="ECO:0007669"/>
    <property type="project" value="UniProtKB-UniRule"/>
</dbReference>
<dbReference type="GO" id="GO:0005524">
    <property type="term" value="F:ATP binding"/>
    <property type="evidence" value="ECO:0007669"/>
    <property type="project" value="UniProtKB-UniRule"/>
</dbReference>
<dbReference type="GO" id="GO:0003676">
    <property type="term" value="F:nucleic acid binding"/>
    <property type="evidence" value="ECO:0007669"/>
    <property type="project" value="InterPro"/>
</dbReference>
<dbReference type="GO" id="GO:0006421">
    <property type="term" value="P:asparaginyl-tRNA aminoacylation"/>
    <property type="evidence" value="ECO:0007669"/>
    <property type="project" value="UniProtKB-UniRule"/>
</dbReference>
<dbReference type="CDD" id="cd00776">
    <property type="entry name" value="AsxRS_core"/>
    <property type="match status" value="1"/>
</dbReference>
<dbReference type="CDD" id="cd04318">
    <property type="entry name" value="EcAsnRS_like_N"/>
    <property type="match status" value="1"/>
</dbReference>
<dbReference type="FunFam" id="3.30.930.10:FF:000016">
    <property type="entry name" value="Asparagine--tRNA ligase"/>
    <property type="match status" value="1"/>
</dbReference>
<dbReference type="Gene3D" id="3.30.930.10">
    <property type="entry name" value="Bira Bifunctional Protein, Domain 2"/>
    <property type="match status" value="1"/>
</dbReference>
<dbReference type="Gene3D" id="2.40.50.140">
    <property type="entry name" value="Nucleic acid-binding proteins"/>
    <property type="match status" value="1"/>
</dbReference>
<dbReference type="HAMAP" id="MF_00534">
    <property type="entry name" value="Asn_tRNA_synth"/>
    <property type="match status" value="1"/>
</dbReference>
<dbReference type="InterPro" id="IPR004364">
    <property type="entry name" value="Aa-tRNA-synt_II"/>
</dbReference>
<dbReference type="InterPro" id="IPR006195">
    <property type="entry name" value="aa-tRNA-synth_II"/>
</dbReference>
<dbReference type="InterPro" id="IPR045864">
    <property type="entry name" value="aa-tRNA-synth_II/BPL/LPL"/>
</dbReference>
<dbReference type="InterPro" id="IPR004522">
    <property type="entry name" value="Asn-tRNA-ligase"/>
</dbReference>
<dbReference type="InterPro" id="IPR002312">
    <property type="entry name" value="Asp/Asn-tRNA-synth_IIb"/>
</dbReference>
<dbReference type="InterPro" id="IPR012340">
    <property type="entry name" value="NA-bd_OB-fold"/>
</dbReference>
<dbReference type="InterPro" id="IPR004365">
    <property type="entry name" value="NA-bd_OB_tRNA"/>
</dbReference>
<dbReference type="NCBIfam" id="TIGR00457">
    <property type="entry name" value="asnS"/>
    <property type="match status" value="1"/>
</dbReference>
<dbReference type="NCBIfam" id="NF003037">
    <property type="entry name" value="PRK03932.1"/>
    <property type="match status" value="1"/>
</dbReference>
<dbReference type="PANTHER" id="PTHR22594:SF34">
    <property type="entry name" value="ASPARAGINE--TRNA LIGASE, MITOCHONDRIAL-RELATED"/>
    <property type="match status" value="1"/>
</dbReference>
<dbReference type="PANTHER" id="PTHR22594">
    <property type="entry name" value="ASPARTYL/LYSYL-TRNA SYNTHETASE"/>
    <property type="match status" value="1"/>
</dbReference>
<dbReference type="Pfam" id="PF00152">
    <property type="entry name" value="tRNA-synt_2"/>
    <property type="match status" value="1"/>
</dbReference>
<dbReference type="Pfam" id="PF01336">
    <property type="entry name" value="tRNA_anti-codon"/>
    <property type="match status" value="1"/>
</dbReference>
<dbReference type="PRINTS" id="PR01042">
    <property type="entry name" value="TRNASYNTHASP"/>
</dbReference>
<dbReference type="SUPFAM" id="SSF55681">
    <property type="entry name" value="Class II aaRS and biotin synthetases"/>
    <property type="match status" value="1"/>
</dbReference>
<dbReference type="SUPFAM" id="SSF50249">
    <property type="entry name" value="Nucleic acid-binding proteins"/>
    <property type="match status" value="1"/>
</dbReference>
<dbReference type="PROSITE" id="PS50862">
    <property type="entry name" value="AA_TRNA_LIGASE_II"/>
    <property type="match status" value="1"/>
</dbReference>
<comment type="catalytic activity">
    <reaction evidence="1">
        <text>tRNA(Asn) + L-asparagine + ATP = L-asparaginyl-tRNA(Asn) + AMP + diphosphate + H(+)</text>
        <dbReference type="Rhea" id="RHEA:11180"/>
        <dbReference type="Rhea" id="RHEA-COMP:9659"/>
        <dbReference type="Rhea" id="RHEA-COMP:9674"/>
        <dbReference type="ChEBI" id="CHEBI:15378"/>
        <dbReference type="ChEBI" id="CHEBI:30616"/>
        <dbReference type="ChEBI" id="CHEBI:33019"/>
        <dbReference type="ChEBI" id="CHEBI:58048"/>
        <dbReference type="ChEBI" id="CHEBI:78442"/>
        <dbReference type="ChEBI" id="CHEBI:78515"/>
        <dbReference type="ChEBI" id="CHEBI:456215"/>
        <dbReference type="EC" id="6.1.1.22"/>
    </reaction>
</comment>
<comment type="subunit">
    <text evidence="1">Homodimer.</text>
</comment>
<comment type="subcellular location">
    <subcellularLocation>
        <location evidence="1">Cytoplasm</location>
    </subcellularLocation>
</comment>
<comment type="similarity">
    <text evidence="1">Belongs to the class-II aminoacyl-tRNA synthetase family.</text>
</comment>
<gene>
    <name evidence="1" type="primary">asnS</name>
    <name type="ordered locus">PA0026</name>
</gene>
<feature type="chain" id="PRO_1000128214" description="Asparagine--tRNA ligase">
    <location>
        <begin position="1"/>
        <end position="457"/>
    </location>
</feature>
<keyword id="KW-0030">Aminoacyl-tRNA synthetase</keyword>
<keyword id="KW-0067">ATP-binding</keyword>
<keyword id="KW-0963">Cytoplasm</keyword>
<keyword id="KW-0436">Ligase</keyword>
<keyword id="KW-0547">Nucleotide-binding</keyword>
<keyword id="KW-0648">Protein biosynthesis</keyword>
<keyword id="KW-1185">Reference proteome</keyword>
<reference key="1">
    <citation type="journal article" date="2008" name="J. Bacteriol.">
        <title>Comparative genome analysis of 'Candidatus Phytoplasma australiense' (subgroup tuf-Australia I; rp-A) and 'Ca. Phytoplasma asteris' strains OY-M and AY-WB.</title>
        <authorList>
            <person name="Tran-Nguyen L.T."/>
            <person name="Kube M."/>
            <person name="Schneider B."/>
            <person name="Reinhardt R."/>
            <person name="Gibb K.S."/>
        </authorList>
    </citation>
    <scope>NUCLEOTIDE SEQUENCE [LARGE SCALE GENOMIC DNA]</scope>
</reference>
<protein>
    <recommendedName>
        <fullName evidence="1">Asparagine--tRNA ligase</fullName>
        <ecNumber evidence="1">6.1.1.22</ecNumber>
    </recommendedName>
    <alternativeName>
        <fullName evidence="1">Asparaginyl-tRNA synthetase</fullName>
        <shortName evidence="1">AsnRS</shortName>
    </alternativeName>
</protein>
<organism>
    <name type="scientific">Phytoplasma australiense</name>
    <dbReference type="NCBI Taxonomy" id="59748"/>
    <lineage>
        <taxon>Bacteria</taxon>
        <taxon>Bacillati</taxon>
        <taxon>Mycoplasmatota</taxon>
        <taxon>Mollicutes</taxon>
        <taxon>Acholeplasmatales</taxon>
        <taxon>Acholeplasmataceae</taxon>
        <taxon>Candidatus Phytoplasma</taxon>
        <taxon>16SrXII (Stolbur group)</taxon>
    </lineage>
</organism>